<proteinExistence type="inferred from homology"/>
<protein>
    <recommendedName>
        <fullName evidence="1">Photosystem II reaction center protein T</fullName>
        <shortName evidence="1">PSII-T</shortName>
    </recommendedName>
</protein>
<name>PSBT_ASPOF</name>
<evidence type="ECO:0000255" key="1">
    <source>
        <dbReference type="HAMAP-Rule" id="MF_00808"/>
    </source>
</evidence>
<accession>Q67HV1</accession>
<comment type="function">
    <text evidence="1">Found at the monomer-monomer interface of the photosystem II (PS II) dimer, plays a role in assembly and dimerization of PSII. PSII is a light-driven water plastoquinone oxidoreductase, using light energy to abstract electrons from H(2)O, generating a proton gradient subsequently used for ATP formation.</text>
</comment>
<comment type="subunit">
    <text evidence="1">PSII is composed of 1 copy each of membrane proteins PsbA, PsbB, PsbC, PsbD, PsbE, PsbF, PsbH, PsbI, PsbJ, PsbK, PsbL, PsbM, PsbT, PsbY, PsbZ, Psb30/Ycf12, at least 3 peripheral proteins of the oxygen-evolving complex and a large number of cofactors. It forms dimeric complexes.</text>
</comment>
<comment type="subcellular location">
    <subcellularLocation>
        <location evidence="1">Plastid</location>
        <location evidence="1">Chloroplast thylakoid membrane</location>
        <topology evidence="1">Single-pass membrane protein</topology>
    </subcellularLocation>
</comment>
<comment type="similarity">
    <text evidence="1">Belongs to the PsbT family.</text>
</comment>
<gene>
    <name evidence="1" type="primary">psbT</name>
</gene>
<keyword id="KW-0150">Chloroplast</keyword>
<keyword id="KW-0472">Membrane</keyword>
<keyword id="KW-0602">Photosynthesis</keyword>
<keyword id="KW-0604">Photosystem II</keyword>
<keyword id="KW-0934">Plastid</keyword>
<keyword id="KW-0793">Thylakoid</keyword>
<keyword id="KW-0812">Transmembrane</keyword>
<keyword id="KW-1133">Transmembrane helix</keyword>
<geneLocation type="chloroplast"/>
<dbReference type="EMBL" id="AY147538">
    <property type="protein sequence ID" value="AAN32253.1"/>
    <property type="molecule type" value="Genomic_DNA"/>
</dbReference>
<dbReference type="RefSeq" id="YP_009370048.1">
    <property type="nucleotide sequence ID" value="NC_034777.1"/>
</dbReference>
<dbReference type="SMR" id="Q67HV1"/>
<dbReference type="GeneID" id="33018205"/>
<dbReference type="GO" id="GO:0009535">
    <property type="term" value="C:chloroplast thylakoid membrane"/>
    <property type="evidence" value="ECO:0007669"/>
    <property type="project" value="UniProtKB-SubCell"/>
</dbReference>
<dbReference type="GO" id="GO:0009539">
    <property type="term" value="C:photosystem II reaction center"/>
    <property type="evidence" value="ECO:0007669"/>
    <property type="project" value="InterPro"/>
</dbReference>
<dbReference type="GO" id="GO:0015979">
    <property type="term" value="P:photosynthesis"/>
    <property type="evidence" value="ECO:0007669"/>
    <property type="project" value="UniProtKB-UniRule"/>
</dbReference>
<dbReference type="HAMAP" id="MF_00808">
    <property type="entry name" value="PSII_PsbT"/>
    <property type="match status" value="1"/>
</dbReference>
<dbReference type="InterPro" id="IPR001743">
    <property type="entry name" value="PSII_PsbT"/>
</dbReference>
<dbReference type="InterPro" id="IPR037268">
    <property type="entry name" value="PSII_PsbT_sf"/>
</dbReference>
<dbReference type="PANTHER" id="PTHR36411">
    <property type="match status" value="1"/>
</dbReference>
<dbReference type="PANTHER" id="PTHR36411:SF2">
    <property type="entry name" value="PHOTOSYSTEM II REACTION CENTER PROTEIN T"/>
    <property type="match status" value="1"/>
</dbReference>
<dbReference type="Pfam" id="PF01405">
    <property type="entry name" value="PsbT"/>
    <property type="match status" value="1"/>
</dbReference>
<dbReference type="SUPFAM" id="SSF161029">
    <property type="entry name" value="Photosystem II reaction center protein T, PsbT"/>
    <property type="match status" value="1"/>
</dbReference>
<organism>
    <name type="scientific">Asparagus officinalis</name>
    <name type="common">Garden asparagus</name>
    <dbReference type="NCBI Taxonomy" id="4686"/>
    <lineage>
        <taxon>Eukaryota</taxon>
        <taxon>Viridiplantae</taxon>
        <taxon>Streptophyta</taxon>
        <taxon>Embryophyta</taxon>
        <taxon>Tracheophyta</taxon>
        <taxon>Spermatophyta</taxon>
        <taxon>Magnoliopsida</taxon>
        <taxon>Liliopsida</taxon>
        <taxon>Asparagales</taxon>
        <taxon>Asparagaceae</taxon>
        <taxon>Asparagoideae</taxon>
        <taxon>Asparagus</taxon>
    </lineage>
</organism>
<feature type="chain" id="PRO_0000217903" description="Photosystem II reaction center protein T">
    <location>
        <begin position="1"/>
        <end position="33"/>
    </location>
</feature>
<feature type="transmembrane region" description="Helical" evidence="1">
    <location>
        <begin position="3"/>
        <end position="23"/>
    </location>
</feature>
<sequence>MEALVYTFLLVSTLGIIFFAIFFREPPKVPTKK</sequence>
<reference key="1">
    <citation type="submission" date="2002-09" db="EMBL/GenBank/DDBJ databases">
        <title>Phylogenetic relationships among the major lineages of Asparagales based on a large chloroplast data set.</title>
        <authorList>
            <person name="McPherson M.A."/>
            <person name="Rai H.S."/>
            <person name="Wong W.A."/>
            <person name="Graham S.W."/>
        </authorList>
    </citation>
    <scope>NUCLEOTIDE SEQUENCE [GENOMIC DNA]</scope>
</reference>